<evidence type="ECO:0000255" key="1"/>
<evidence type="ECO:0000256" key="2">
    <source>
        <dbReference type="SAM" id="MobiDB-lite"/>
    </source>
</evidence>
<evidence type="ECO:0000269" key="3">
    <source>
    </source>
</evidence>
<evidence type="ECO:0000305" key="4"/>
<feature type="chain" id="PRO_0000208746" description="Peroxisomal biogenesis factor 3">
    <location>
        <begin position="1"/>
        <end position="431"/>
    </location>
</feature>
<feature type="topological domain" description="Peroxisomal" evidence="1">
    <location>
        <begin position="1"/>
        <end position="10"/>
    </location>
</feature>
<feature type="transmembrane region" description="Helical" evidence="1">
    <location>
        <begin position="11"/>
        <end position="28"/>
    </location>
</feature>
<feature type="topological domain" description="Cytoplasmic" evidence="1">
    <location>
        <begin position="29"/>
        <end position="431"/>
    </location>
</feature>
<feature type="region of interest" description="Disordered" evidence="2">
    <location>
        <begin position="95"/>
        <end position="126"/>
    </location>
</feature>
<feature type="compositionally biased region" description="Polar residues" evidence="2">
    <location>
        <begin position="112"/>
        <end position="121"/>
    </location>
</feature>
<reference key="1">
    <citation type="journal article" date="2003" name="Mol. Biol. Cell">
        <title>Peroxisome biogenesis occurs in an unsynchronized manner in close association with the endoplasmic reticulum in temperature-sensitive Yarrowia lipolytica Pex3p mutants.</title>
        <authorList>
            <person name="Bascom R.A."/>
            <person name="Chan H."/>
            <person name="Rachubinski R.A."/>
        </authorList>
    </citation>
    <scope>NUCLEOTIDE SEQUENCE [GENOMIC DNA]</scope>
    <scope>FUNCTION</scope>
</reference>
<reference key="2">
    <citation type="journal article" date="2004" name="Nature">
        <title>Genome evolution in yeasts.</title>
        <authorList>
            <person name="Dujon B."/>
            <person name="Sherman D."/>
            <person name="Fischer G."/>
            <person name="Durrens P."/>
            <person name="Casaregola S."/>
            <person name="Lafontaine I."/>
            <person name="de Montigny J."/>
            <person name="Marck C."/>
            <person name="Neuveglise C."/>
            <person name="Talla E."/>
            <person name="Goffard N."/>
            <person name="Frangeul L."/>
            <person name="Aigle M."/>
            <person name="Anthouard V."/>
            <person name="Babour A."/>
            <person name="Barbe V."/>
            <person name="Barnay S."/>
            <person name="Blanchin S."/>
            <person name="Beckerich J.-M."/>
            <person name="Beyne E."/>
            <person name="Bleykasten C."/>
            <person name="Boisrame A."/>
            <person name="Boyer J."/>
            <person name="Cattolico L."/>
            <person name="Confanioleri F."/>
            <person name="de Daruvar A."/>
            <person name="Despons L."/>
            <person name="Fabre E."/>
            <person name="Fairhead C."/>
            <person name="Ferry-Dumazet H."/>
            <person name="Groppi A."/>
            <person name="Hantraye F."/>
            <person name="Hennequin C."/>
            <person name="Jauniaux N."/>
            <person name="Joyet P."/>
            <person name="Kachouri R."/>
            <person name="Kerrest A."/>
            <person name="Koszul R."/>
            <person name="Lemaire M."/>
            <person name="Lesur I."/>
            <person name="Ma L."/>
            <person name="Muller H."/>
            <person name="Nicaud J.-M."/>
            <person name="Nikolski M."/>
            <person name="Oztas S."/>
            <person name="Ozier-Kalogeropoulos O."/>
            <person name="Pellenz S."/>
            <person name="Potier S."/>
            <person name="Richard G.-F."/>
            <person name="Straub M.-L."/>
            <person name="Suleau A."/>
            <person name="Swennen D."/>
            <person name="Tekaia F."/>
            <person name="Wesolowski-Louvel M."/>
            <person name="Westhof E."/>
            <person name="Wirth B."/>
            <person name="Zeniou-Meyer M."/>
            <person name="Zivanovic Y."/>
            <person name="Bolotin-Fukuhara M."/>
            <person name="Thierry A."/>
            <person name="Bouchier C."/>
            <person name="Caudron B."/>
            <person name="Scarpelli C."/>
            <person name="Gaillardin C."/>
            <person name="Weissenbach J."/>
            <person name="Wincker P."/>
            <person name="Souciet J.-L."/>
        </authorList>
    </citation>
    <scope>NUCLEOTIDE SEQUENCE [LARGE SCALE GENOMIC DNA]</scope>
    <source>
        <strain>CLIB 122 / E 150</strain>
    </source>
</reference>
<proteinExistence type="inferred from homology"/>
<protein>
    <recommendedName>
        <fullName>Peroxisomal biogenesis factor 3</fullName>
    </recommendedName>
    <alternativeName>
        <fullName>Peroxin-3</fullName>
    </alternativeName>
</protein>
<sequence>MDFFRRHQKKVLALVGVALSSYLFIDYVKKKFFEIQGRLSSERTAKQNLRRRFEQNQQDADFTIMALLSSLTTPVMERYPVDQIKAELQSKRRPTDRVLALESSTSSSATAQTVPTMTSGATEEGEKSKTQLWQDLKRTTISRAFSLVYADALLIFFTRLQLNILGRRNYVNSVVALAQQGREGNAEGRVAPSFGDLADMGYFGDLSGSSSFGETIVDPDLDEQYLTFSWWLLNEGWVSLSERVEEAVRRVWDPVSPKAELGFDELSELIGRTQMLIDRPLNPSSPLNFLSQLLPPREQEEYVLAQNPSDTAAPIVGPTLRRLLDETADFIESPNAAEVIERLVHSGLSVFMDKLAVTFGATPADSGSPYPVVLPTAKVKLPSILANMARQAGGMAQGSPGVENEYIDVMNQVQELTSFSAVVYSSFDWAL</sequence>
<gene>
    <name type="primary">PEX3</name>
    <name type="ordered locus">YALI0F22539g</name>
</gene>
<name>PEX3_YARLI</name>
<organism>
    <name type="scientific">Yarrowia lipolytica (strain CLIB 122 / E 150)</name>
    <name type="common">Yeast</name>
    <name type="synonym">Candida lipolytica</name>
    <dbReference type="NCBI Taxonomy" id="284591"/>
    <lineage>
        <taxon>Eukaryota</taxon>
        <taxon>Fungi</taxon>
        <taxon>Dikarya</taxon>
        <taxon>Ascomycota</taxon>
        <taxon>Saccharomycotina</taxon>
        <taxon>Dipodascomycetes</taxon>
        <taxon>Dipodascales</taxon>
        <taxon>Dipodascales incertae sedis</taxon>
        <taxon>Yarrowia</taxon>
    </lineage>
</organism>
<keyword id="KW-0472">Membrane</keyword>
<keyword id="KW-0576">Peroxisome</keyword>
<keyword id="KW-0962">Peroxisome biogenesis</keyword>
<keyword id="KW-1185">Reference proteome</keyword>
<keyword id="KW-0812">Transmembrane</keyword>
<keyword id="KW-1133">Transmembrane helix</keyword>
<accession>Q874C0</accession>
<accession>Q6C0Q8</accession>
<comment type="function">
    <text evidence="3">Involved in peroxisome biosynthesis. Seems to directly or indirectly sequesters components of the peroxisome biogenesis machinery.</text>
</comment>
<comment type="subcellular location">
    <subcellularLocation>
        <location>Peroxisome membrane</location>
        <topology>Single-pass membrane protein</topology>
    </subcellularLocation>
</comment>
<comment type="similarity">
    <text evidence="4">Belongs to the peroxin-3 family.</text>
</comment>
<dbReference type="EMBL" id="AF474003">
    <property type="protein sequence ID" value="AAO33094.1"/>
    <property type="molecule type" value="Genomic_DNA"/>
</dbReference>
<dbReference type="EMBL" id="CR382132">
    <property type="protein sequence ID" value="CAG78565.1"/>
    <property type="molecule type" value="Genomic_DNA"/>
</dbReference>
<dbReference type="RefSeq" id="XP_505754.1">
    <property type="nucleotide sequence ID" value="XM_505754.1"/>
</dbReference>
<dbReference type="SMR" id="Q874C0"/>
<dbReference type="FunCoup" id="Q874C0">
    <property type="interactions" value="198"/>
</dbReference>
<dbReference type="STRING" id="284591.Q874C0"/>
<dbReference type="EnsemblFungi" id="CAG78565">
    <property type="protein sequence ID" value="CAG78565"/>
    <property type="gene ID" value="YALI0_F22539g"/>
</dbReference>
<dbReference type="KEGG" id="yli:2908532"/>
<dbReference type="VEuPathDB" id="FungiDB:YALI0_F22539g"/>
<dbReference type="HOGENOM" id="CLU_017002_3_0_1"/>
<dbReference type="InParanoid" id="Q874C0"/>
<dbReference type="OMA" id="HRGWKDL"/>
<dbReference type="OrthoDB" id="77135at4891"/>
<dbReference type="Proteomes" id="UP000001300">
    <property type="component" value="Chromosome F"/>
</dbReference>
<dbReference type="GO" id="GO:0005778">
    <property type="term" value="C:peroxisomal membrane"/>
    <property type="evidence" value="ECO:0000318"/>
    <property type="project" value="GO_Central"/>
</dbReference>
<dbReference type="GO" id="GO:0030674">
    <property type="term" value="F:protein-macromolecule adaptor activity"/>
    <property type="evidence" value="ECO:0000318"/>
    <property type="project" value="GO_Central"/>
</dbReference>
<dbReference type="GO" id="GO:0045046">
    <property type="term" value="P:protein import into peroxisome membrane"/>
    <property type="evidence" value="ECO:0000318"/>
    <property type="project" value="GO_Central"/>
</dbReference>
<dbReference type="InterPro" id="IPR006966">
    <property type="entry name" value="Peroxin-3"/>
</dbReference>
<dbReference type="PANTHER" id="PTHR28080">
    <property type="entry name" value="PEROXISOMAL BIOGENESIS FACTOR 3"/>
    <property type="match status" value="1"/>
</dbReference>
<dbReference type="PANTHER" id="PTHR28080:SF1">
    <property type="entry name" value="PEROXISOMAL BIOGENESIS FACTOR 3"/>
    <property type="match status" value="1"/>
</dbReference>
<dbReference type="Pfam" id="PF04882">
    <property type="entry name" value="Peroxin-3"/>
    <property type="match status" value="1"/>
</dbReference>